<feature type="chain" id="PRO_0000067714" description="DNA-directed RNA polymerase subunit beta'">
    <location>
        <begin position="1"/>
        <end position="1414"/>
    </location>
</feature>
<feature type="region of interest" description="Disordered" evidence="2">
    <location>
        <begin position="1378"/>
        <end position="1414"/>
    </location>
</feature>
<feature type="binding site" evidence="1">
    <location>
        <position position="70"/>
    </location>
    <ligand>
        <name>Zn(2+)</name>
        <dbReference type="ChEBI" id="CHEBI:29105"/>
        <label>1</label>
    </ligand>
</feature>
<feature type="binding site" evidence="1">
    <location>
        <position position="72"/>
    </location>
    <ligand>
        <name>Zn(2+)</name>
        <dbReference type="ChEBI" id="CHEBI:29105"/>
        <label>1</label>
    </ligand>
</feature>
<feature type="binding site" evidence="1">
    <location>
        <position position="85"/>
    </location>
    <ligand>
        <name>Zn(2+)</name>
        <dbReference type="ChEBI" id="CHEBI:29105"/>
        <label>1</label>
    </ligand>
</feature>
<feature type="binding site" evidence="1">
    <location>
        <position position="88"/>
    </location>
    <ligand>
        <name>Zn(2+)</name>
        <dbReference type="ChEBI" id="CHEBI:29105"/>
        <label>1</label>
    </ligand>
</feature>
<feature type="binding site" evidence="1">
    <location>
        <position position="460"/>
    </location>
    <ligand>
        <name>Mg(2+)</name>
        <dbReference type="ChEBI" id="CHEBI:18420"/>
    </ligand>
</feature>
<feature type="binding site" evidence="1">
    <location>
        <position position="462"/>
    </location>
    <ligand>
        <name>Mg(2+)</name>
        <dbReference type="ChEBI" id="CHEBI:18420"/>
    </ligand>
</feature>
<feature type="binding site" evidence="1">
    <location>
        <position position="464"/>
    </location>
    <ligand>
        <name>Mg(2+)</name>
        <dbReference type="ChEBI" id="CHEBI:18420"/>
    </ligand>
</feature>
<feature type="binding site" evidence="1">
    <location>
        <position position="814"/>
    </location>
    <ligand>
        <name>Zn(2+)</name>
        <dbReference type="ChEBI" id="CHEBI:29105"/>
        <label>2</label>
    </ligand>
</feature>
<feature type="binding site" evidence="1">
    <location>
        <position position="888"/>
    </location>
    <ligand>
        <name>Zn(2+)</name>
        <dbReference type="ChEBI" id="CHEBI:29105"/>
        <label>2</label>
    </ligand>
</feature>
<feature type="binding site" evidence="1">
    <location>
        <position position="895"/>
    </location>
    <ligand>
        <name>Zn(2+)</name>
        <dbReference type="ChEBI" id="CHEBI:29105"/>
        <label>2</label>
    </ligand>
</feature>
<feature type="binding site" evidence="1">
    <location>
        <position position="898"/>
    </location>
    <ligand>
        <name>Zn(2+)</name>
        <dbReference type="ChEBI" id="CHEBI:29105"/>
        <label>2</label>
    </ligand>
</feature>
<reference key="1">
    <citation type="journal article" date="2003" name="Nat. Genet.">
        <title>Comparative analysis of the genome sequences of Bordetella pertussis, Bordetella parapertussis and Bordetella bronchiseptica.</title>
        <authorList>
            <person name="Parkhill J."/>
            <person name="Sebaihia M."/>
            <person name="Preston A."/>
            <person name="Murphy L.D."/>
            <person name="Thomson N.R."/>
            <person name="Harris D.E."/>
            <person name="Holden M.T.G."/>
            <person name="Churcher C.M."/>
            <person name="Bentley S.D."/>
            <person name="Mungall K.L."/>
            <person name="Cerdeno-Tarraga A.-M."/>
            <person name="Temple L."/>
            <person name="James K.D."/>
            <person name="Harris B."/>
            <person name="Quail M.A."/>
            <person name="Achtman M."/>
            <person name="Atkin R."/>
            <person name="Baker S."/>
            <person name="Basham D."/>
            <person name="Bason N."/>
            <person name="Cherevach I."/>
            <person name="Chillingworth T."/>
            <person name="Collins M."/>
            <person name="Cronin A."/>
            <person name="Davis P."/>
            <person name="Doggett J."/>
            <person name="Feltwell T."/>
            <person name="Goble A."/>
            <person name="Hamlin N."/>
            <person name="Hauser H."/>
            <person name="Holroyd S."/>
            <person name="Jagels K."/>
            <person name="Leather S."/>
            <person name="Moule S."/>
            <person name="Norberczak H."/>
            <person name="O'Neil S."/>
            <person name="Ormond D."/>
            <person name="Price C."/>
            <person name="Rabbinowitsch E."/>
            <person name="Rutter S."/>
            <person name="Sanders M."/>
            <person name="Saunders D."/>
            <person name="Seeger K."/>
            <person name="Sharp S."/>
            <person name="Simmonds M."/>
            <person name="Skelton J."/>
            <person name="Squares R."/>
            <person name="Squares S."/>
            <person name="Stevens K."/>
            <person name="Unwin L."/>
            <person name="Whitehead S."/>
            <person name="Barrell B.G."/>
            <person name="Maskell D.J."/>
        </authorList>
    </citation>
    <scope>NUCLEOTIDE SEQUENCE [LARGE SCALE GENOMIC DNA]</scope>
    <source>
        <strain>ATCC BAA-588 / NCTC 13252 / RB50</strain>
    </source>
</reference>
<dbReference type="EC" id="2.7.7.6" evidence="1"/>
<dbReference type="EMBL" id="BX640437">
    <property type="protein sequence ID" value="CAE30517.1"/>
    <property type="molecule type" value="Genomic_DNA"/>
</dbReference>
<dbReference type="RefSeq" id="WP_003818292.1">
    <property type="nucleotide sequence ID" value="NC_002927.3"/>
</dbReference>
<dbReference type="SMR" id="Q7WRD8"/>
<dbReference type="GeneID" id="93206244"/>
<dbReference type="KEGG" id="bbr:BB0015"/>
<dbReference type="eggNOG" id="COG0086">
    <property type="taxonomic scope" value="Bacteria"/>
</dbReference>
<dbReference type="HOGENOM" id="CLU_000524_3_1_4"/>
<dbReference type="Proteomes" id="UP000001027">
    <property type="component" value="Chromosome"/>
</dbReference>
<dbReference type="GO" id="GO:0000428">
    <property type="term" value="C:DNA-directed RNA polymerase complex"/>
    <property type="evidence" value="ECO:0007669"/>
    <property type="project" value="UniProtKB-KW"/>
</dbReference>
<dbReference type="GO" id="GO:0003677">
    <property type="term" value="F:DNA binding"/>
    <property type="evidence" value="ECO:0007669"/>
    <property type="project" value="UniProtKB-UniRule"/>
</dbReference>
<dbReference type="GO" id="GO:0003899">
    <property type="term" value="F:DNA-directed RNA polymerase activity"/>
    <property type="evidence" value="ECO:0007669"/>
    <property type="project" value="UniProtKB-UniRule"/>
</dbReference>
<dbReference type="GO" id="GO:0000287">
    <property type="term" value="F:magnesium ion binding"/>
    <property type="evidence" value="ECO:0007669"/>
    <property type="project" value="UniProtKB-UniRule"/>
</dbReference>
<dbReference type="GO" id="GO:0008270">
    <property type="term" value="F:zinc ion binding"/>
    <property type="evidence" value="ECO:0007669"/>
    <property type="project" value="UniProtKB-UniRule"/>
</dbReference>
<dbReference type="GO" id="GO:0006351">
    <property type="term" value="P:DNA-templated transcription"/>
    <property type="evidence" value="ECO:0007669"/>
    <property type="project" value="UniProtKB-UniRule"/>
</dbReference>
<dbReference type="CDD" id="cd02655">
    <property type="entry name" value="RNAP_beta'_C"/>
    <property type="match status" value="1"/>
</dbReference>
<dbReference type="CDD" id="cd01609">
    <property type="entry name" value="RNAP_beta'_N"/>
    <property type="match status" value="1"/>
</dbReference>
<dbReference type="FunFam" id="1.10.132.30:FF:000003">
    <property type="entry name" value="DNA-directed RNA polymerase subunit beta"/>
    <property type="match status" value="1"/>
</dbReference>
<dbReference type="FunFam" id="1.10.150.390:FF:000002">
    <property type="entry name" value="DNA-directed RNA polymerase subunit beta"/>
    <property type="match status" value="1"/>
</dbReference>
<dbReference type="FunFam" id="4.10.860.120:FF:000001">
    <property type="entry name" value="DNA-directed RNA polymerase subunit beta"/>
    <property type="match status" value="1"/>
</dbReference>
<dbReference type="Gene3D" id="1.10.132.30">
    <property type="match status" value="1"/>
</dbReference>
<dbReference type="Gene3D" id="1.10.150.390">
    <property type="match status" value="1"/>
</dbReference>
<dbReference type="Gene3D" id="1.10.1790.20">
    <property type="match status" value="1"/>
</dbReference>
<dbReference type="Gene3D" id="1.10.40.90">
    <property type="match status" value="1"/>
</dbReference>
<dbReference type="Gene3D" id="2.40.40.20">
    <property type="match status" value="1"/>
</dbReference>
<dbReference type="Gene3D" id="2.40.50.100">
    <property type="match status" value="3"/>
</dbReference>
<dbReference type="Gene3D" id="4.10.860.120">
    <property type="entry name" value="RNA polymerase II, clamp domain"/>
    <property type="match status" value="1"/>
</dbReference>
<dbReference type="Gene3D" id="1.10.274.100">
    <property type="entry name" value="RNA polymerase Rpb1, domain 3"/>
    <property type="match status" value="1"/>
</dbReference>
<dbReference type="HAMAP" id="MF_01322">
    <property type="entry name" value="RNApol_bact_RpoC"/>
    <property type="match status" value="1"/>
</dbReference>
<dbReference type="InterPro" id="IPR045867">
    <property type="entry name" value="DNA-dir_RpoC_beta_prime"/>
</dbReference>
<dbReference type="InterPro" id="IPR012754">
    <property type="entry name" value="DNA-dir_RpoC_beta_prime_bact"/>
</dbReference>
<dbReference type="InterPro" id="IPR000722">
    <property type="entry name" value="RNA_pol_asu"/>
</dbReference>
<dbReference type="InterPro" id="IPR006592">
    <property type="entry name" value="RNA_pol_N"/>
</dbReference>
<dbReference type="InterPro" id="IPR007080">
    <property type="entry name" value="RNA_pol_Rpb1_1"/>
</dbReference>
<dbReference type="InterPro" id="IPR007066">
    <property type="entry name" value="RNA_pol_Rpb1_3"/>
</dbReference>
<dbReference type="InterPro" id="IPR042102">
    <property type="entry name" value="RNA_pol_Rpb1_3_sf"/>
</dbReference>
<dbReference type="InterPro" id="IPR007083">
    <property type="entry name" value="RNA_pol_Rpb1_4"/>
</dbReference>
<dbReference type="InterPro" id="IPR007081">
    <property type="entry name" value="RNA_pol_Rpb1_5"/>
</dbReference>
<dbReference type="InterPro" id="IPR044893">
    <property type="entry name" value="RNA_pol_Rpb1_clamp_domain"/>
</dbReference>
<dbReference type="InterPro" id="IPR038120">
    <property type="entry name" value="Rpb1_funnel_sf"/>
</dbReference>
<dbReference type="NCBIfam" id="TIGR02386">
    <property type="entry name" value="rpoC_TIGR"/>
    <property type="match status" value="1"/>
</dbReference>
<dbReference type="PANTHER" id="PTHR19376">
    <property type="entry name" value="DNA-DIRECTED RNA POLYMERASE"/>
    <property type="match status" value="1"/>
</dbReference>
<dbReference type="PANTHER" id="PTHR19376:SF54">
    <property type="entry name" value="DNA-DIRECTED RNA POLYMERASE SUBUNIT BETA"/>
    <property type="match status" value="1"/>
</dbReference>
<dbReference type="Pfam" id="PF04997">
    <property type="entry name" value="RNA_pol_Rpb1_1"/>
    <property type="match status" value="1"/>
</dbReference>
<dbReference type="Pfam" id="PF00623">
    <property type="entry name" value="RNA_pol_Rpb1_2"/>
    <property type="match status" value="2"/>
</dbReference>
<dbReference type="Pfam" id="PF04983">
    <property type="entry name" value="RNA_pol_Rpb1_3"/>
    <property type="match status" value="1"/>
</dbReference>
<dbReference type="Pfam" id="PF05000">
    <property type="entry name" value="RNA_pol_Rpb1_4"/>
    <property type="match status" value="1"/>
</dbReference>
<dbReference type="Pfam" id="PF04998">
    <property type="entry name" value="RNA_pol_Rpb1_5"/>
    <property type="match status" value="1"/>
</dbReference>
<dbReference type="SMART" id="SM00663">
    <property type="entry name" value="RPOLA_N"/>
    <property type="match status" value="1"/>
</dbReference>
<dbReference type="SUPFAM" id="SSF64484">
    <property type="entry name" value="beta and beta-prime subunits of DNA dependent RNA-polymerase"/>
    <property type="match status" value="1"/>
</dbReference>
<accession>Q7WRD8</accession>
<proteinExistence type="inferred from homology"/>
<organism>
    <name type="scientific">Bordetella bronchiseptica (strain ATCC BAA-588 / NCTC 13252 / RB50)</name>
    <name type="common">Alcaligenes bronchisepticus</name>
    <dbReference type="NCBI Taxonomy" id="257310"/>
    <lineage>
        <taxon>Bacteria</taxon>
        <taxon>Pseudomonadati</taxon>
        <taxon>Pseudomonadota</taxon>
        <taxon>Betaproteobacteria</taxon>
        <taxon>Burkholderiales</taxon>
        <taxon>Alcaligenaceae</taxon>
        <taxon>Bordetella</taxon>
    </lineage>
</organism>
<keyword id="KW-0240">DNA-directed RNA polymerase</keyword>
<keyword id="KW-0460">Magnesium</keyword>
<keyword id="KW-0479">Metal-binding</keyword>
<keyword id="KW-0548">Nucleotidyltransferase</keyword>
<keyword id="KW-0804">Transcription</keyword>
<keyword id="KW-0808">Transferase</keyword>
<keyword id="KW-0862">Zinc</keyword>
<evidence type="ECO:0000255" key="1">
    <source>
        <dbReference type="HAMAP-Rule" id="MF_01322"/>
    </source>
</evidence>
<evidence type="ECO:0000256" key="2">
    <source>
        <dbReference type="SAM" id="MobiDB-lite"/>
    </source>
</evidence>
<gene>
    <name evidence="1" type="primary">rpoC</name>
    <name type="synonym">tabB</name>
    <name type="ordered locus">BB0015</name>
</gene>
<sequence>MKALLDLFKQVSQDEQFDAIKIGIASPEKIRSWSFGEVRKPETINYRTFKPERDGLFCAKIFGPIKDYECLCGKYKRLKHRGVICEKCGVEVTVAKVRRERMGHIELASPVAHIWFLKSLPSRLGMVLDMTLRDIERVLYFEAWCVIEPGMTPLKRGQIMSDDDFLAKTEEYGDDFRALMGAEAVRELLRTIDIDREVETLRGELKATSSEAKIKKISKRLKVLEGFQKSGIKAEWMVMEVLPVLPPDLRPLVPLDGGRFATSDLNDLYRRVINRNNRLKRLLELKAPEIILRNEKRMLQEAVDSLLDNGRRGKAMTGANKRQLKSLADMIKGKSGRFRQNLLGKRVDYSGRSVIVVGPQLKLHQCGLPKLMALELFKPFIFNRLEMMGLATTIKAAKKLVESQEPVVWDILEEVIREHPVMLNRAPTLHRLGIQAFEPVLIEGKAIQLHPLVCAAFNADFDGDQMAVHVPLSLEAQLEARTLMLASNNVLFPANGEPSIVPSQDIVLGLYYTTRERINGKGEGIFFADVSEVQRAYDNGEVELQTRITVRLTEYERDEQGEWQPVKHRHETTVGRALLSEILPKGLPFTVLNKALKKKEISRLINQSFRRCGLRDTVIFADKLMQSGFRLATRGGISIAMEDMLIPKAKEGILAEASREVKEIDKQYSSGLVTSQERYNNVVDIWGKAGDKVGKAMMEQLATEPVVNRHGEEVRQESFNSIYMMADSGARGSAAQIRQLAGMRGLMAKPDGSIIETPITANFREGLNVLQYFISTHGARKGLADTALKTANSGYLTRRLVDVTQDLVITEDDCGTSHGYAMKALVEGGEVIEPLRDRILGRVAAIDVVNPDTQETAIAAGTLLDEDLVDLIDRLGVDEVKVRTPLTCETRHGLCAHCYGRDLGRGSHVNVGEAVGVIAAQSIGEPGTQLTMRTFHIGGAASRSALASAVETKSNGTVGFASTMRYVTNAKGERVAISRSGELAIFDDNGRERERHKIPYGATVLVGDGEAVKAGTRLASWDPLTRPIVSEYSGAVRFENIEEGVTVAKQVDEVTGLSTLVVITPKTRGGKIVMRPQIKLVNENGEDVKIAGTDHSVNISFPVGALITVRDGQQVAVGEVLARIPQESQKTRDITGGLPRVAELFEARSPKDAGMLAEVTGTVSFGKDTKGKQRLVITDLEGVSHEFLILKEKQVLVHDGQVVNKGEMIVDGPADPHDILRLQGIEKLATYIVDEVQDVYRLQGVKINDKHIEVIVRQMLRRVNIVDPGDTEFIPGEQVERSELLNENDRVVAEDKRPASYDNVLLGITKASLSTDSFISAASFQETTRVLTEAAIMGKRDDLRGLKENVIVGRLIPAGTGLAYHIARKDKEALEAAEREAARQLANPFEDAPVTVGGEPEAPAADTPSDDSAE</sequence>
<protein>
    <recommendedName>
        <fullName evidence="1">DNA-directed RNA polymerase subunit beta'</fullName>
        <shortName evidence="1">RNAP subunit beta'</shortName>
        <ecNumber evidence="1">2.7.7.6</ecNumber>
    </recommendedName>
    <alternativeName>
        <fullName evidence="1">RNA polymerase subunit beta'</fullName>
    </alternativeName>
    <alternativeName>
        <fullName evidence="1">Transcriptase subunit beta'</fullName>
    </alternativeName>
</protein>
<name>RPOC_BORBR</name>
<comment type="function">
    <text evidence="1">DNA-dependent RNA polymerase catalyzes the transcription of DNA into RNA using the four ribonucleoside triphosphates as substrates.</text>
</comment>
<comment type="catalytic activity">
    <reaction evidence="1">
        <text>RNA(n) + a ribonucleoside 5'-triphosphate = RNA(n+1) + diphosphate</text>
        <dbReference type="Rhea" id="RHEA:21248"/>
        <dbReference type="Rhea" id="RHEA-COMP:14527"/>
        <dbReference type="Rhea" id="RHEA-COMP:17342"/>
        <dbReference type="ChEBI" id="CHEBI:33019"/>
        <dbReference type="ChEBI" id="CHEBI:61557"/>
        <dbReference type="ChEBI" id="CHEBI:140395"/>
        <dbReference type="EC" id="2.7.7.6"/>
    </reaction>
</comment>
<comment type="cofactor">
    <cofactor evidence="1">
        <name>Mg(2+)</name>
        <dbReference type="ChEBI" id="CHEBI:18420"/>
    </cofactor>
    <text evidence="1">Binds 1 Mg(2+) ion per subunit.</text>
</comment>
<comment type="cofactor">
    <cofactor evidence="1">
        <name>Zn(2+)</name>
        <dbReference type="ChEBI" id="CHEBI:29105"/>
    </cofactor>
    <text evidence="1">Binds 2 Zn(2+) ions per subunit.</text>
</comment>
<comment type="subunit">
    <text evidence="1">The RNAP catalytic core consists of 2 alpha, 1 beta, 1 beta' and 1 omega subunit. When a sigma factor is associated with the core the holoenzyme is formed, which can initiate transcription.</text>
</comment>
<comment type="similarity">
    <text evidence="1">Belongs to the RNA polymerase beta' chain family.</text>
</comment>